<sequence>MARFRGSITKVSRRLGIALSPKAEKYLERRPYAPGQHGQSRRGKVSEYALQLREKQKMKYLYGILEKQFRNYYKKAVAQRGVTGDNLVKMLERRLDNVVYRCGFSPSRAGARQLVTHGHMLVNGKKVNIPSFLVSPGDQIEFRQKSRNLDAVADSLNKVPDSRIPEWIQVDKANRKAVFLAIPEREAVQEPFNEQLVVELYSK</sequence>
<feature type="chain" id="PRO_0000132364" description="Small ribosomal subunit protein uS4">
    <location>
        <begin position="1"/>
        <end position="203"/>
    </location>
</feature>
<feature type="domain" description="S4 RNA-binding" evidence="1">
    <location>
        <begin position="93"/>
        <end position="154"/>
    </location>
</feature>
<name>RS4_CHLTE</name>
<gene>
    <name evidence="1" type="primary">rpsD</name>
    <name type="ordered locus">CT2163</name>
</gene>
<keyword id="KW-1185">Reference proteome</keyword>
<keyword id="KW-0687">Ribonucleoprotein</keyword>
<keyword id="KW-0689">Ribosomal protein</keyword>
<keyword id="KW-0694">RNA-binding</keyword>
<keyword id="KW-0699">rRNA-binding</keyword>
<protein>
    <recommendedName>
        <fullName evidence="1">Small ribosomal subunit protein uS4</fullName>
    </recommendedName>
    <alternativeName>
        <fullName evidence="2">30S ribosomal protein S4</fullName>
    </alternativeName>
</protein>
<proteinExistence type="inferred from homology"/>
<accession>P59129</accession>
<accession>Q8KAJ7</accession>
<organism>
    <name type="scientific">Chlorobaculum tepidum (strain ATCC 49652 / DSM 12025 / NBRC 103806 / TLS)</name>
    <name type="common">Chlorobium tepidum</name>
    <dbReference type="NCBI Taxonomy" id="194439"/>
    <lineage>
        <taxon>Bacteria</taxon>
        <taxon>Pseudomonadati</taxon>
        <taxon>Chlorobiota</taxon>
        <taxon>Chlorobiia</taxon>
        <taxon>Chlorobiales</taxon>
        <taxon>Chlorobiaceae</taxon>
        <taxon>Chlorobaculum</taxon>
    </lineage>
</organism>
<evidence type="ECO:0000255" key="1">
    <source>
        <dbReference type="HAMAP-Rule" id="MF_01306"/>
    </source>
</evidence>
<evidence type="ECO:0000305" key="2"/>
<comment type="function">
    <text evidence="1">One of the primary rRNA binding proteins, it binds directly to 16S rRNA where it nucleates assembly of the body of the 30S subunit.</text>
</comment>
<comment type="function">
    <text evidence="1">With S5 and S12 plays an important role in translational accuracy.</text>
</comment>
<comment type="subunit">
    <text evidence="1">Part of the 30S ribosomal subunit. Contacts protein S5. The interaction surface between S4 and S5 is involved in control of translational fidelity.</text>
</comment>
<comment type="similarity">
    <text evidence="1">Belongs to the universal ribosomal protein uS4 family.</text>
</comment>
<dbReference type="EMBL" id="AE006470">
    <property type="protein sequence ID" value="AAM73379.1"/>
    <property type="molecule type" value="Genomic_DNA"/>
</dbReference>
<dbReference type="RefSeq" id="NP_663037.1">
    <property type="nucleotide sequence ID" value="NC_002932.3"/>
</dbReference>
<dbReference type="RefSeq" id="WP_010933816.1">
    <property type="nucleotide sequence ID" value="NC_002932.3"/>
</dbReference>
<dbReference type="SMR" id="P59129"/>
<dbReference type="STRING" id="194439.CT2163"/>
<dbReference type="EnsemblBacteria" id="AAM73379">
    <property type="protein sequence ID" value="AAM73379"/>
    <property type="gene ID" value="CT2163"/>
</dbReference>
<dbReference type="KEGG" id="cte:CT2163"/>
<dbReference type="PATRIC" id="fig|194439.7.peg.1962"/>
<dbReference type="eggNOG" id="COG0522">
    <property type="taxonomic scope" value="Bacteria"/>
</dbReference>
<dbReference type="HOGENOM" id="CLU_092403_0_2_10"/>
<dbReference type="OrthoDB" id="9803672at2"/>
<dbReference type="Proteomes" id="UP000001007">
    <property type="component" value="Chromosome"/>
</dbReference>
<dbReference type="GO" id="GO:0015935">
    <property type="term" value="C:small ribosomal subunit"/>
    <property type="evidence" value="ECO:0007669"/>
    <property type="project" value="InterPro"/>
</dbReference>
<dbReference type="GO" id="GO:0019843">
    <property type="term" value="F:rRNA binding"/>
    <property type="evidence" value="ECO:0007669"/>
    <property type="project" value="UniProtKB-UniRule"/>
</dbReference>
<dbReference type="GO" id="GO:0003735">
    <property type="term" value="F:structural constituent of ribosome"/>
    <property type="evidence" value="ECO:0007669"/>
    <property type="project" value="InterPro"/>
</dbReference>
<dbReference type="GO" id="GO:0042274">
    <property type="term" value="P:ribosomal small subunit biogenesis"/>
    <property type="evidence" value="ECO:0007669"/>
    <property type="project" value="TreeGrafter"/>
</dbReference>
<dbReference type="GO" id="GO:0006412">
    <property type="term" value="P:translation"/>
    <property type="evidence" value="ECO:0007669"/>
    <property type="project" value="UniProtKB-UniRule"/>
</dbReference>
<dbReference type="CDD" id="cd00165">
    <property type="entry name" value="S4"/>
    <property type="match status" value="1"/>
</dbReference>
<dbReference type="FunFam" id="3.10.290.10:FF:000001">
    <property type="entry name" value="30S ribosomal protein S4"/>
    <property type="match status" value="1"/>
</dbReference>
<dbReference type="Gene3D" id="1.10.1050.10">
    <property type="entry name" value="Ribosomal Protein S4 Delta 41, Chain A, domain 1"/>
    <property type="match status" value="1"/>
</dbReference>
<dbReference type="Gene3D" id="3.10.290.10">
    <property type="entry name" value="RNA-binding S4 domain"/>
    <property type="match status" value="1"/>
</dbReference>
<dbReference type="HAMAP" id="MF_01306_B">
    <property type="entry name" value="Ribosomal_uS4_B"/>
    <property type="match status" value="1"/>
</dbReference>
<dbReference type="InterPro" id="IPR022801">
    <property type="entry name" value="Ribosomal_uS4"/>
</dbReference>
<dbReference type="InterPro" id="IPR005709">
    <property type="entry name" value="Ribosomal_uS4_bac-type"/>
</dbReference>
<dbReference type="InterPro" id="IPR018079">
    <property type="entry name" value="Ribosomal_uS4_CS"/>
</dbReference>
<dbReference type="InterPro" id="IPR001912">
    <property type="entry name" value="Ribosomal_uS4_N"/>
</dbReference>
<dbReference type="InterPro" id="IPR002942">
    <property type="entry name" value="S4_RNA-bd"/>
</dbReference>
<dbReference type="InterPro" id="IPR036986">
    <property type="entry name" value="S4_RNA-bd_sf"/>
</dbReference>
<dbReference type="NCBIfam" id="NF003717">
    <property type="entry name" value="PRK05327.1"/>
    <property type="match status" value="1"/>
</dbReference>
<dbReference type="NCBIfam" id="TIGR01017">
    <property type="entry name" value="rpsD_bact"/>
    <property type="match status" value="1"/>
</dbReference>
<dbReference type="PANTHER" id="PTHR11831">
    <property type="entry name" value="30S 40S RIBOSOMAL PROTEIN"/>
    <property type="match status" value="1"/>
</dbReference>
<dbReference type="PANTHER" id="PTHR11831:SF4">
    <property type="entry name" value="SMALL RIBOSOMAL SUBUNIT PROTEIN US4M"/>
    <property type="match status" value="1"/>
</dbReference>
<dbReference type="Pfam" id="PF00163">
    <property type="entry name" value="Ribosomal_S4"/>
    <property type="match status" value="1"/>
</dbReference>
<dbReference type="Pfam" id="PF01479">
    <property type="entry name" value="S4"/>
    <property type="match status" value="1"/>
</dbReference>
<dbReference type="SMART" id="SM01390">
    <property type="entry name" value="Ribosomal_S4"/>
    <property type="match status" value="1"/>
</dbReference>
<dbReference type="SMART" id="SM00363">
    <property type="entry name" value="S4"/>
    <property type="match status" value="1"/>
</dbReference>
<dbReference type="SUPFAM" id="SSF55174">
    <property type="entry name" value="Alpha-L RNA-binding motif"/>
    <property type="match status" value="1"/>
</dbReference>
<dbReference type="PROSITE" id="PS00632">
    <property type="entry name" value="RIBOSOMAL_S4"/>
    <property type="match status" value="1"/>
</dbReference>
<dbReference type="PROSITE" id="PS50889">
    <property type="entry name" value="S4"/>
    <property type="match status" value="1"/>
</dbReference>
<reference key="1">
    <citation type="journal article" date="2002" name="Proc. Natl. Acad. Sci. U.S.A.">
        <title>The complete genome sequence of Chlorobium tepidum TLS, a photosynthetic, anaerobic, green-sulfur bacterium.</title>
        <authorList>
            <person name="Eisen J.A."/>
            <person name="Nelson K.E."/>
            <person name="Paulsen I.T."/>
            <person name="Heidelberg J.F."/>
            <person name="Wu M."/>
            <person name="Dodson R.J."/>
            <person name="DeBoy R.T."/>
            <person name="Gwinn M.L."/>
            <person name="Nelson W.C."/>
            <person name="Haft D.H."/>
            <person name="Hickey E.K."/>
            <person name="Peterson J.D."/>
            <person name="Durkin A.S."/>
            <person name="Kolonay J.F."/>
            <person name="Yang F."/>
            <person name="Holt I.E."/>
            <person name="Umayam L.A."/>
            <person name="Mason T.M."/>
            <person name="Brenner M."/>
            <person name="Shea T.P."/>
            <person name="Parksey D.S."/>
            <person name="Nierman W.C."/>
            <person name="Feldblyum T.V."/>
            <person name="Hansen C.L."/>
            <person name="Craven M.B."/>
            <person name="Radune D."/>
            <person name="Vamathevan J.J."/>
            <person name="Khouri H.M."/>
            <person name="White O."/>
            <person name="Gruber T.M."/>
            <person name="Ketchum K.A."/>
            <person name="Venter J.C."/>
            <person name="Tettelin H."/>
            <person name="Bryant D.A."/>
            <person name="Fraser C.M."/>
        </authorList>
    </citation>
    <scope>NUCLEOTIDE SEQUENCE [LARGE SCALE GENOMIC DNA]</scope>
    <source>
        <strain>ATCC 49652 / DSM 12025 / NBRC 103806 / TLS</strain>
    </source>
</reference>